<dbReference type="EMBL" id="U57754">
    <property type="protein sequence ID" value="AAB53574.1"/>
    <property type="molecule type" value="mRNA"/>
</dbReference>
<dbReference type="SMR" id="O02757"/>
<dbReference type="STRING" id="9685.ENSFCAP00000013242"/>
<dbReference type="GlyCosmos" id="O02757">
    <property type="glycosylation" value="5 sites, No reported glycans"/>
</dbReference>
<dbReference type="PaxDb" id="9685-ENSFCAP00000013242"/>
<dbReference type="eggNOG" id="ENOG502SAVP">
    <property type="taxonomic scope" value="Eukaryota"/>
</dbReference>
<dbReference type="InParanoid" id="O02757"/>
<dbReference type="Proteomes" id="UP000011712">
    <property type="component" value="Unplaced"/>
</dbReference>
<dbReference type="GO" id="GO:0009897">
    <property type="term" value="C:external side of plasma membrane"/>
    <property type="evidence" value="ECO:0000318"/>
    <property type="project" value="GO_Central"/>
</dbReference>
<dbReference type="GO" id="GO:0006955">
    <property type="term" value="P:immune response"/>
    <property type="evidence" value="ECO:0007669"/>
    <property type="project" value="InterPro"/>
</dbReference>
<dbReference type="GO" id="GO:0032733">
    <property type="term" value="P:positive regulation of interleukin-10 production"/>
    <property type="evidence" value="ECO:0000250"/>
    <property type="project" value="UniProtKB"/>
</dbReference>
<dbReference type="GO" id="GO:0032743">
    <property type="term" value="P:positive regulation of interleukin-2 production"/>
    <property type="evidence" value="ECO:0000250"/>
    <property type="project" value="UniProtKB"/>
</dbReference>
<dbReference type="GO" id="GO:0032753">
    <property type="term" value="P:positive regulation of interleukin-4 production"/>
    <property type="evidence" value="ECO:0000250"/>
    <property type="project" value="UniProtKB"/>
</dbReference>
<dbReference type="GO" id="GO:0045840">
    <property type="term" value="P:positive regulation of mitotic nuclear division"/>
    <property type="evidence" value="ECO:0000250"/>
    <property type="project" value="UniProtKB"/>
</dbReference>
<dbReference type="GO" id="GO:0042102">
    <property type="term" value="P:positive regulation of T cell proliferation"/>
    <property type="evidence" value="ECO:0000250"/>
    <property type="project" value="UniProtKB"/>
</dbReference>
<dbReference type="GO" id="GO:0042110">
    <property type="term" value="P:T cell activation"/>
    <property type="evidence" value="ECO:0000318"/>
    <property type="project" value="GO_Central"/>
</dbReference>
<dbReference type="GO" id="GO:0031295">
    <property type="term" value="P:T cell costimulation"/>
    <property type="evidence" value="ECO:0000318"/>
    <property type="project" value="GO_Central"/>
</dbReference>
<dbReference type="GO" id="GO:0050852">
    <property type="term" value="P:T cell receptor signaling pathway"/>
    <property type="evidence" value="ECO:0000318"/>
    <property type="project" value="GO_Central"/>
</dbReference>
<dbReference type="FunFam" id="2.60.40.10:FF:000716">
    <property type="entry name" value="T-cell-specific surface glycoprotein CD28"/>
    <property type="match status" value="1"/>
</dbReference>
<dbReference type="Gene3D" id="2.60.40.10">
    <property type="entry name" value="Immunoglobulins"/>
    <property type="match status" value="1"/>
</dbReference>
<dbReference type="InterPro" id="IPR008093">
    <property type="entry name" value="CD28"/>
</dbReference>
<dbReference type="InterPro" id="IPR040216">
    <property type="entry name" value="CTLA4/CD28"/>
</dbReference>
<dbReference type="InterPro" id="IPR036179">
    <property type="entry name" value="Ig-like_dom_sf"/>
</dbReference>
<dbReference type="InterPro" id="IPR013783">
    <property type="entry name" value="Ig-like_fold"/>
</dbReference>
<dbReference type="InterPro" id="IPR013106">
    <property type="entry name" value="Ig_V-set"/>
</dbReference>
<dbReference type="PANTHER" id="PTHR11494">
    <property type="entry name" value="CYTOTOXIC T-LYMPHOCYTE PROTEIN"/>
    <property type="match status" value="1"/>
</dbReference>
<dbReference type="PANTHER" id="PTHR11494:SF7">
    <property type="entry name" value="T-CELL-SPECIFIC SURFACE GLYCOPROTEIN CD28"/>
    <property type="match status" value="1"/>
</dbReference>
<dbReference type="Pfam" id="PF15910">
    <property type="entry name" value="V-set_2"/>
    <property type="match status" value="1"/>
</dbReference>
<dbReference type="PRINTS" id="PR01717">
    <property type="entry name" value="CD28ANTIGEN"/>
</dbReference>
<dbReference type="SMART" id="SM00406">
    <property type="entry name" value="IGv"/>
    <property type="match status" value="1"/>
</dbReference>
<dbReference type="SUPFAM" id="SSF48726">
    <property type="entry name" value="Immunoglobulin"/>
    <property type="match status" value="1"/>
</dbReference>
<sequence>MILRLLLALNFFPSIQVTENKILVKQLPRLVVYNNEVNLSCKYTHNFFSKEFRASLYKGVDSAVEVCVVNGNYSHQPQFYSSTGFDCDGKLGNETVTFYLRNLFVNQTDIYFCKIEVMYPPPYIDNEKSNGTIIHVKEKHLCPAQLSPESSKPFWALVVVGGILGFYSLLATVALGACWMKTKRSRILQSDYMNMTPRRPGPTRRHYQPYAPARDFAAYRS</sequence>
<comment type="function">
    <text evidence="2">Receptor that plays a role in T-cell activation, proliferation, survival and the maintenance of immune homeostasis. Functions not only as an amplifier of TCR signals but delivers unique signals that control intracellular biochemical events that alter the gene expression program of T-cells. Stimulation upon engagement of its cognate ligands CD80 or CD86 increases proliferation and expression of various cytokines in particular IL2 production in both CD4(+) and CD8(+) T-cell subsets. Mechanistically, ligation induces recruitment of protein kinase C-theta/PRKCQ and GRB2 leading to NF-kappa-B activation via both PI3K/Akt-dependent and -independent pathways. In conjunction with TCR/CD3 ligation and CD40L costimulation, enhances the production of IL4 and IL10 in T-cells.</text>
</comment>
<comment type="subunit">
    <text evidence="2">Homodimer; disulfide-linked. Interacts with DUSP14. Binds to CD80/B7-1 and CD86/B7-2/B70. Interacts with GRB2. Interacts with PIK3R1. Interacts with PRKCQ.</text>
</comment>
<comment type="subcellular location">
    <subcellularLocation>
        <location evidence="2">Cell membrane</location>
        <topology evidence="2">Single-pass type I membrane protein</topology>
    </subcellularLocation>
</comment>
<comment type="PTM">
    <text evidence="2">Phosphorylated by LCK. Dephosphorylated by PTPN11.</text>
</comment>
<organism>
    <name type="scientific">Felis catus</name>
    <name type="common">Cat</name>
    <name type="synonym">Felis silvestris catus</name>
    <dbReference type="NCBI Taxonomy" id="9685"/>
    <lineage>
        <taxon>Eukaryota</taxon>
        <taxon>Metazoa</taxon>
        <taxon>Chordata</taxon>
        <taxon>Craniata</taxon>
        <taxon>Vertebrata</taxon>
        <taxon>Euteleostomi</taxon>
        <taxon>Mammalia</taxon>
        <taxon>Eutheria</taxon>
        <taxon>Laurasiatheria</taxon>
        <taxon>Carnivora</taxon>
        <taxon>Feliformia</taxon>
        <taxon>Felidae</taxon>
        <taxon>Felinae</taxon>
        <taxon>Felis</taxon>
    </lineage>
</organism>
<name>CD28_FELCA</name>
<feature type="signal peptide" evidence="3">
    <location>
        <begin position="1"/>
        <end position="20"/>
    </location>
</feature>
<feature type="chain" id="PRO_0000226723" description="T-cell-specific surface glycoprotein CD28">
    <location>
        <begin position="21"/>
        <end position="221"/>
    </location>
</feature>
<feature type="topological domain" description="Extracellular" evidence="3">
    <location>
        <begin position="21"/>
        <end position="153"/>
    </location>
</feature>
<feature type="transmembrane region" description="Helical" evidence="3">
    <location>
        <begin position="154"/>
        <end position="174"/>
    </location>
</feature>
<feature type="topological domain" description="Cytoplasmic" evidence="3">
    <location>
        <begin position="175"/>
        <end position="221"/>
    </location>
</feature>
<feature type="domain" description="Ig-like V-type">
    <location>
        <begin position="29"/>
        <end position="138"/>
    </location>
</feature>
<feature type="modified residue" description="Phosphoserine" evidence="2">
    <location>
        <position position="190"/>
    </location>
</feature>
<feature type="modified residue" description="Phosphotyrosine" evidence="2">
    <location>
        <position position="192"/>
    </location>
</feature>
<feature type="modified residue" description="Phosphotyrosine" evidence="2">
    <location>
        <position position="210"/>
    </location>
</feature>
<feature type="glycosylation site" description="N-linked (GlcNAc...) asparagine" evidence="3">
    <location>
        <position position="38"/>
    </location>
</feature>
<feature type="glycosylation site" description="N-linked (GlcNAc...) asparagine" evidence="3">
    <location>
        <position position="72"/>
    </location>
</feature>
<feature type="glycosylation site" description="N-linked (GlcNAc...) asparagine" evidence="3">
    <location>
        <position position="93"/>
    </location>
</feature>
<feature type="glycosylation site" description="N-linked (GlcNAc...) asparagine" evidence="3">
    <location>
        <position position="106"/>
    </location>
</feature>
<feature type="glycosylation site" description="N-linked (GlcNAc...) asparagine" evidence="3">
    <location>
        <position position="130"/>
    </location>
</feature>
<feature type="disulfide bond" evidence="1">
    <location>
        <begin position="41"/>
        <end position="113"/>
    </location>
</feature>
<feature type="disulfide bond" evidence="1">
    <location>
        <begin position="67"/>
        <end position="87"/>
    </location>
</feature>
<protein>
    <recommendedName>
        <fullName>T-cell-specific surface glycoprotein CD28</fullName>
    </recommendedName>
    <cdAntigenName>CD28</cdAntigenName>
</protein>
<proteinExistence type="evidence at transcript level"/>
<keyword id="KW-1003">Cell membrane</keyword>
<keyword id="KW-1015">Disulfide bond</keyword>
<keyword id="KW-0325">Glycoprotein</keyword>
<keyword id="KW-0393">Immunoglobulin domain</keyword>
<keyword id="KW-0472">Membrane</keyword>
<keyword id="KW-0597">Phosphoprotein</keyword>
<keyword id="KW-0675">Receptor</keyword>
<keyword id="KW-1185">Reference proteome</keyword>
<keyword id="KW-0732">Signal</keyword>
<keyword id="KW-0812">Transmembrane</keyword>
<keyword id="KW-1133">Transmembrane helix</keyword>
<gene>
    <name type="primary">CD28</name>
</gene>
<evidence type="ECO:0000250" key="1"/>
<evidence type="ECO:0000250" key="2">
    <source>
        <dbReference type="UniProtKB" id="P10747"/>
    </source>
</evidence>
<evidence type="ECO:0000255" key="3"/>
<accession>O02757</accession>
<reference key="1">
    <citation type="journal article" date="2000" name="Vet. Immunol. Immunopathol.">
        <title>Molecular cloning and expression of feline CD28 and CTLA-4 cDNA.</title>
        <authorList>
            <person name="Choi I.S."/>
            <person name="Hash S.M."/>
            <person name="Collisson E.W."/>
        </authorList>
    </citation>
    <scope>NUCLEOTIDE SEQUENCE [MRNA]</scope>
</reference>